<reference key="1">
    <citation type="journal article" date="2008" name="PLoS ONE">
        <title>Genome sequence of the saprophyte Leptospira biflexa provides insights into the evolution of Leptospira and the pathogenesis of leptospirosis.</title>
        <authorList>
            <person name="Picardeau M."/>
            <person name="Bulach D.M."/>
            <person name="Bouchier C."/>
            <person name="Zuerner R.L."/>
            <person name="Zidane N."/>
            <person name="Wilson P.J."/>
            <person name="Creno S."/>
            <person name="Kuczek E.S."/>
            <person name="Bommezzadri S."/>
            <person name="Davis J.C."/>
            <person name="McGrath A."/>
            <person name="Johnson M.J."/>
            <person name="Boursaux-Eude C."/>
            <person name="Seemann T."/>
            <person name="Rouy Z."/>
            <person name="Coppel R.L."/>
            <person name="Rood J.I."/>
            <person name="Lajus A."/>
            <person name="Davies J.K."/>
            <person name="Medigue C."/>
            <person name="Adler B."/>
        </authorList>
    </citation>
    <scope>NUCLEOTIDE SEQUENCE [LARGE SCALE GENOMIC DNA]</scope>
    <source>
        <strain>Patoc 1 / Ames</strain>
    </source>
</reference>
<sequence length="249" mass="26969">MRKKIIAGNWKMNLTLAEAKEITKGLLSACDSSSYEIMVFPSALHLESVASIARDSQLIVGAQNAYQSGLTAMTGEISPVQLAELGIQTVLVGHSERRQFLGETSEFDNTKISYFLKHGLRVVYCVGETWAEREKGNTFSVLEDQIGKGLKGITSDLFKNLVIAYEPVWAIGTGKVATPVEAEEAHAFIRKEIGKLFVGADLVAENIQILYGGSVKPDNIKELLAKPNIDGGLVGGASQKLDLFLGLLK</sequence>
<organism>
    <name type="scientific">Leptospira biflexa serovar Patoc (strain Patoc 1 / Ames)</name>
    <dbReference type="NCBI Taxonomy" id="355278"/>
    <lineage>
        <taxon>Bacteria</taxon>
        <taxon>Pseudomonadati</taxon>
        <taxon>Spirochaetota</taxon>
        <taxon>Spirochaetia</taxon>
        <taxon>Leptospirales</taxon>
        <taxon>Leptospiraceae</taxon>
        <taxon>Leptospira</taxon>
    </lineage>
</organism>
<protein>
    <recommendedName>
        <fullName evidence="1">Triosephosphate isomerase</fullName>
        <shortName evidence="1">TIM</shortName>
        <shortName evidence="1">TPI</shortName>
        <ecNumber evidence="1">5.3.1.1</ecNumber>
    </recommendedName>
    <alternativeName>
        <fullName evidence="1">Triose-phosphate isomerase</fullName>
    </alternativeName>
</protein>
<accession>B0SB22</accession>
<gene>
    <name evidence="1" type="primary">tpiA</name>
    <name type="ordered locus">LBF_2028</name>
</gene>
<comment type="function">
    <text evidence="1">Involved in the gluconeogenesis. Catalyzes stereospecifically the conversion of dihydroxyacetone phosphate (DHAP) to D-glyceraldehyde-3-phosphate (G3P).</text>
</comment>
<comment type="catalytic activity">
    <reaction evidence="1">
        <text>D-glyceraldehyde 3-phosphate = dihydroxyacetone phosphate</text>
        <dbReference type="Rhea" id="RHEA:18585"/>
        <dbReference type="ChEBI" id="CHEBI:57642"/>
        <dbReference type="ChEBI" id="CHEBI:59776"/>
        <dbReference type="EC" id="5.3.1.1"/>
    </reaction>
</comment>
<comment type="pathway">
    <text evidence="1">Carbohydrate biosynthesis; gluconeogenesis.</text>
</comment>
<comment type="pathway">
    <text evidence="1">Carbohydrate degradation; glycolysis; D-glyceraldehyde 3-phosphate from glycerone phosphate: step 1/1.</text>
</comment>
<comment type="subunit">
    <text evidence="1">Homodimer.</text>
</comment>
<comment type="subcellular location">
    <subcellularLocation>
        <location evidence="1">Cytoplasm</location>
    </subcellularLocation>
</comment>
<comment type="similarity">
    <text evidence="1">Belongs to the triosephosphate isomerase family.</text>
</comment>
<keyword id="KW-0963">Cytoplasm</keyword>
<keyword id="KW-0312">Gluconeogenesis</keyword>
<keyword id="KW-0324">Glycolysis</keyword>
<keyword id="KW-0413">Isomerase</keyword>
<feature type="chain" id="PRO_1000096508" description="Triosephosphate isomerase">
    <location>
        <begin position="1"/>
        <end position="249"/>
    </location>
</feature>
<feature type="active site" description="Electrophile" evidence="1">
    <location>
        <position position="94"/>
    </location>
</feature>
<feature type="active site" description="Proton acceptor" evidence="1">
    <location>
        <position position="166"/>
    </location>
</feature>
<feature type="binding site" evidence="1">
    <location>
        <begin position="9"/>
        <end position="11"/>
    </location>
    <ligand>
        <name>substrate</name>
    </ligand>
</feature>
<feature type="binding site" evidence="1">
    <location>
        <position position="172"/>
    </location>
    <ligand>
        <name>substrate</name>
    </ligand>
</feature>
<feature type="binding site" evidence="1">
    <location>
        <position position="214"/>
    </location>
    <ligand>
        <name>substrate</name>
    </ligand>
</feature>
<feature type="binding site" evidence="1">
    <location>
        <begin position="235"/>
        <end position="236"/>
    </location>
    <ligand>
        <name>substrate</name>
    </ligand>
</feature>
<proteinExistence type="inferred from homology"/>
<name>TPIS_LEPBA</name>
<evidence type="ECO:0000255" key="1">
    <source>
        <dbReference type="HAMAP-Rule" id="MF_00147"/>
    </source>
</evidence>
<dbReference type="EC" id="5.3.1.1" evidence="1"/>
<dbReference type="EMBL" id="CP000777">
    <property type="protein sequence ID" value="ABZ94528.1"/>
    <property type="molecule type" value="Genomic_DNA"/>
</dbReference>
<dbReference type="RefSeq" id="WP_012389054.1">
    <property type="nucleotide sequence ID" value="NC_010842.1"/>
</dbReference>
<dbReference type="SMR" id="B0SB22"/>
<dbReference type="KEGG" id="lbf:LBF_2028"/>
<dbReference type="HOGENOM" id="CLU_024251_2_1_12"/>
<dbReference type="UniPathway" id="UPA00109">
    <property type="reaction ID" value="UER00189"/>
</dbReference>
<dbReference type="UniPathway" id="UPA00138"/>
<dbReference type="GO" id="GO:0005829">
    <property type="term" value="C:cytosol"/>
    <property type="evidence" value="ECO:0007669"/>
    <property type="project" value="TreeGrafter"/>
</dbReference>
<dbReference type="GO" id="GO:0004807">
    <property type="term" value="F:triose-phosphate isomerase activity"/>
    <property type="evidence" value="ECO:0007669"/>
    <property type="project" value="UniProtKB-UniRule"/>
</dbReference>
<dbReference type="GO" id="GO:0006094">
    <property type="term" value="P:gluconeogenesis"/>
    <property type="evidence" value="ECO:0007669"/>
    <property type="project" value="UniProtKB-UniRule"/>
</dbReference>
<dbReference type="GO" id="GO:0046166">
    <property type="term" value="P:glyceraldehyde-3-phosphate biosynthetic process"/>
    <property type="evidence" value="ECO:0007669"/>
    <property type="project" value="TreeGrafter"/>
</dbReference>
<dbReference type="GO" id="GO:0019563">
    <property type="term" value="P:glycerol catabolic process"/>
    <property type="evidence" value="ECO:0007669"/>
    <property type="project" value="TreeGrafter"/>
</dbReference>
<dbReference type="GO" id="GO:0006096">
    <property type="term" value="P:glycolytic process"/>
    <property type="evidence" value="ECO:0007669"/>
    <property type="project" value="UniProtKB-UniRule"/>
</dbReference>
<dbReference type="CDD" id="cd00311">
    <property type="entry name" value="TIM"/>
    <property type="match status" value="1"/>
</dbReference>
<dbReference type="FunFam" id="3.20.20.70:FF:000016">
    <property type="entry name" value="Triosephosphate isomerase"/>
    <property type="match status" value="1"/>
</dbReference>
<dbReference type="Gene3D" id="3.20.20.70">
    <property type="entry name" value="Aldolase class I"/>
    <property type="match status" value="1"/>
</dbReference>
<dbReference type="HAMAP" id="MF_00147_B">
    <property type="entry name" value="TIM_B"/>
    <property type="match status" value="1"/>
</dbReference>
<dbReference type="InterPro" id="IPR013785">
    <property type="entry name" value="Aldolase_TIM"/>
</dbReference>
<dbReference type="InterPro" id="IPR035990">
    <property type="entry name" value="TIM_sf"/>
</dbReference>
<dbReference type="InterPro" id="IPR022896">
    <property type="entry name" value="TrioseP_Isoase_bac/euk"/>
</dbReference>
<dbReference type="InterPro" id="IPR000652">
    <property type="entry name" value="Triosephosphate_isomerase"/>
</dbReference>
<dbReference type="InterPro" id="IPR020861">
    <property type="entry name" value="Triosephosphate_isomerase_AS"/>
</dbReference>
<dbReference type="NCBIfam" id="TIGR00419">
    <property type="entry name" value="tim"/>
    <property type="match status" value="1"/>
</dbReference>
<dbReference type="PANTHER" id="PTHR21139">
    <property type="entry name" value="TRIOSEPHOSPHATE ISOMERASE"/>
    <property type="match status" value="1"/>
</dbReference>
<dbReference type="PANTHER" id="PTHR21139:SF42">
    <property type="entry name" value="TRIOSEPHOSPHATE ISOMERASE"/>
    <property type="match status" value="1"/>
</dbReference>
<dbReference type="Pfam" id="PF00121">
    <property type="entry name" value="TIM"/>
    <property type="match status" value="1"/>
</dbReference>
<dbReference type="SUPFAM" id="SSF51351">
    <property type="entry name" value="Triosephosphate isomerase (TIM)"/>
    <property type="match status" value="1"/>
</dbReference>
<dbReference type="PROSITE" id="PS00171">
    <property type="entry name" value="TIM_1"/>
    <property type="match status" value="1"/>
</dbReference>
<dbReference type="PROSITE" id="PS51440">
    <property type="entry name" value="TIM_2"/>
    <property type="match status" value="1"/>
</dbReference>